<gene>
    <name evidence="2" type="primary">atpE</name>
    <name type="ordered locus">jhp_1135</name>
</gene>
<proteinExistence type="inferred from homology"/>
<name>ATPL_HELPJ</name>
<evidence type="ECO:0000250" key="1"/>
<evidence type="ECO:0000255" key="2">
    <source>
        <dbReference type="HAMAP-Rule" id="MF_01396"/>
    </source>
</evidence>
<comment type="function">
    <text evidence="2">F(1)F(0) ATP synthase produces ATP from ADP in the presence of a proton or sodium gradient. F-type ATPases consist of two structural domains, F(1) containing the extramembraneous catalytic core and F(0) containing the membrane proton channel, linked together by a central stalk and a peripheral stalk. During catalysis, ATP synthesis in the catalytic domain of F(1) is coupled via a rotary mechanism of the central stalk subunits to proton translocation.</text>
</comment>
<comment type="function">
    <text evidence="2">Key component of the F(0) channel; it plays a direct role in translocation across the membrane. A homomeric c-ring of between 10-14 subunits forms the central stalk rotor element with the F(1) delta and epsilon subunits.</text>
</comment>
<comment type="subunit">
    <text evidence="2">F-type ATPases have 2 components, F(1) - the catalytic core - and F(0) - the membrane proton channel. F(1) has five subunits: alpha(3), beta(3), gamma(1), delta(1), epsilon(1). F(0) has three main subunits: a(1), b(2) and c(10-14). The alpha and beta chains form an alternating ring which encloses part of the gamma chain. F(1) is attached to F(0) by a central stalk formed by the gamma and epsilon chains, while a peripheral stalk is formed by the delta and b chains.</text>
</comment>
<comment type="subcellular location">
    <subcellularLocation>
        <location evidence="2">Cell inner membrane</location>
        <topology evidence="2">Multi-pass membrane protein</topology>
    </subcellularLocation>
</comment>
<comment type="miscellaneous">
    <text evidence="1">Dicyclohexylcarbodiimide (DCDD) binding to the active glutamate residue inhibits ATPase in vitro.</text>
</comment>
<comment type="similarity">
    <text evidence="2">Belongs to the ATPase C chain family.</text>
</comment>
<keyword id="KW-0066">ATP synthesis</keyword>
<keyword id="KW-0997">Cell inner membrane</keyword>
<keyword id="KW-1003">Cell membrane</keyword>
<keyword id="KW-0138">CF(0)</keyword>
<keyword id="KW-0375">Hydrogen ion transport</keyword>
<keyword id="KW-0406">Ion transport</keyword>
<keyword id="KW-0446">Lipid-binding</keyword>
<keyword id="KW-0472">Membrane</keyword>
<keyword id="KW-0812">Transmembrane</keyword>
<keyword id="KW-1133">Transmembrane helix</keyword>
<keyword id="KW-0813">Transport</keyword>
<dbReference type="EMBL" id="AE001439">
    <property type="protein sequence ID" value="AAD06717.1"/>
    <property type="molecule type" value="Genomic_DNA"/>
</dbReference>
<dbReference type="PIR" id="D71845">
    <property type="entry name" value="D71845"/>
</dbReference>
<dbReference type="RefSeq" id="WP_000669961.1">
    <property type="nucleotide sequence ID" value="NZ_CP011330.1"/>
</dbReference>
<dbReference type="SMR" id="Q9ZK12"/>
<dbReference type="KEGG" id="hpj:jhp_1135"/>
<dbReference type="PATRIC" id="fig|85963.30.peg.1441"/>
<dbReference type="eggNOG" id="COG0636">
    <property type="taxonomic scope" value="Bacteria"/>
</dbReference>
<dbReference type="Proteomes" id="UP000000804">
    <property type="component" value="Chromosome"/>
</dbReference>
<dbReference type="GO" id="GO:0005886">
    <property type="term" value="C:plasma membrane"/>
    <property type="evidence" value="ECO:0007669"/>
    <property type="project" value="UniProtKB-SubCell"/>
</dbReference>
<dbReference type="GO" id="GO:0045259">
    <property type="term" value="C:proton-transporting ATP synthase complex"/>
    <property type="evidence" value="ECO:0007669"/>
    <property type="project" value="UniProtKB-KW"/>
</dbReference>
<dbReference type="GO" id="GO:0033177">
    <property type="term" value="C:proton-transporting two-sector ATPase complex, proton-transporting domain"/>
    <property type="evidence" value="ECO:0007669"/>
    <property type="project" value="InterPro"/>
</dbReference>
<dbReference type="GO" id="GO:0008289">
    <property type="term" value="F:lipid binding"/>
    <property type="evidence" value="ECO:0007669"/>
    <property type="project" value="UniProtKB-KW"/>
</dbReference>
<dbReference type="GO" id="GO:0046933">
    <property type="term" value="F:proton-transporting ATP synthase activity, rotational mechanism"/>
    <property type="evidence" value="ECO:0007669"/>
    <property type="project" value="UniProtKB-UniRule"/>
</dbReference>
<dbReference type="CDD" id="cd18121">
    <property type="entry name" value="ATP-synt_Fo_c"/>
    <property type="match status" value="1"/>
</dbReference>
<dbReference type="Gene3D" id="1.20.20.10">
    <property type="entry name" value="F1F0 ATP synthase subunit C"/>
    <property type="match status" value="1"/>
</dbReference>
<dbReference type="HAMAP" id="MF_01396">
    <property type="entry name" value="ATP_synth_c_bact"/>
    <property type="match status" value="1"/>
</dbReference>
<dbReference type="InterPro" id="IPR000454">
    <property type="entry name" value="ATP_synth_F0_csu"/>
</dbReference>
<dbReference type="InterPro" id="IPR020537">
    <property type="entry name" value="ATP_synth_F0_csu_DDCD_BS"/>
</dbReference>
<dbReference type="InterPro" id="IPR038662">
    <property type="entry name" value="ATP_synth_F0_csu_sf"/>
</dbReference>
<dbReference type="InterPro" id="IPR002379">
    <property type="entry name" value="ATPase_proteolipid_c-like_dom"/>
</dbReference>
<dbReference type="InterPro" id="IPR035921">
    <property type="entry name" value="F/V-ATP_Csub_sf"/>
</dbReference>
<dbReference type="NCBIfam" id="NF006295">
    <property type="entry name" value="PRK08482.1"/>
    <property type="match status" value="1"/>
</dbReference>
<dbReference type="Pfam" id="PF00137">
    <property type="entry name" value="ATP-synt_C"/>
    <property type="match status" value="1"/>
</dbReference>
<dbReference type="PRINTS" id="PR00124">
    <property type="entry name" value="ATPASEC"/>
</dbReference>
<dbReference type="SUPFAM" id="SSF81333">
    <property type="entry name" value="F1F0 ATP synthase subunit C"/>
    <property type="match status" value="1"/>
</dbReference>
<dbReference type="PROSITE" id="PS00605">
    <property type="entry name" value="ATPASE_C"/>
    <property type="match status" value="1"/>
</dbReference>
<accession>Q9ZK12</accession>
<protein>
    <recommendedName>
        <fullName evidence="2">ATP synthase subunit c</fullName>
    </recommendedName>
    <alternativeName>
        <fullName evidence="2">ATP synthase F(0) sector subunit c</fullName>
    </alternativeName>
    <alternativeName>
        <fullName evidence="2">F-type ATPase subunit c</fullName>
        <shortName evidence="2">F-ATPase subunit c</shortName>
    </alternativeName>
    <alternativeName>
        <fullName evidence="2">Lipid-binding protein</fullName>
    </alternativeName>
</protein>
<organism>
    <name type="scientific">Helicobacter pylori (strain J99 / ATCC 700824)</name>
    <name type="common">Campylobacter pylori J99</name>
    <dbReference type="NCBI Taxonomy" id="85963"/>
    <lineage>
        <taxon>Bacteria</taxon>
        <taxon>Pseudomonadati</taxon>
        <taxon>Campylobacterota</taxon>
        <taxon>Epsilonproteobacteria</taxon>
        <taxon>Campylobacterales</taxon>
        <taxon>Helicobacteraceae</taxon>
        <taxon>Helicobacter</taxon>
    </lineage>
</organism>
<reference key="1">
    <citation type="journal article" date="1999" name="Nature">
        <title>Genomic sequence comparison of two unrelated isolates of the human gastric pathogen Helicobacter pylori.</title>
        <authorList>
            <person name="Alm R.A."/>
            <person name="Ling L.-S.L."/>
            <person name="Moir D.T."/>
            <person name="King B.L."/>
            <person name="Brown E.D."/>
            <person name="Doig P.C."/>
            <person name="Smith D.R."/>
            <person name="Noonan B."/>
            <person name="Guild B.C."/>
            <person name="deJonge B.L."/>
            <person name="Carmel G."/>
            <person name="Tummino P.J."/>
            <person name="Caruso A."/>
            <person name="Uria-Nickelsen M."/>
            <person name="Mills D.M."/>
            <person name="Ives C."/>
            <person name="Gibson R."/>
            <person name="Merberg D."/>
            <person name="Mills S.D."/>
            <person name="Jiang Q."/>
            <person name="Taylor D.E."/>
            <person name="Vovis G.F."/>
            <person name="Trust T.J."/>
        </authorList>
    </citation>
    <scope>NUCLEOTIDE SEQUENCE [LARGE SCALE GENOMIC DNA]</scope>
    <source>
        <strain>J99 / ATCC 700824</strain>
    </source>
</reference>
<sequence>MKFLALFFLALAGVAFAHDGGMGGMDMIKSYSILGAMIGLGIAAFGGAIGMGNAAAATITGTARNPGVGGKLLTTMFVAMAMIEAQVIYTLVFAIIAIYSNPFLS</sequence>
<feature type="chain" id="PRO_0000112150" description="ATP synthase subunit c">
    <location>
        <begin position="1"/>
        <end position="105"/>
    </location>
</feature>
<feature type="transmembrane region" description="Helical" evidence="2">
    <location>
        <begin position="32"/>
        <end position="52"/>
    </location>
</feature>
<feature type="transmembrane region" description="Helical" evidence="2">
    <location>
        <begin position="78"/>
        <end position="98"/>
    </location>
</feature>
<feature type="site" description="Reversibly protonated during proton transport" evidence="2">
    <location>
        <position position="84"/>
    </location>
</feature>